<accession>B5FX56</accession>
<protein>
    <recommendedName>
        <fullName evidence="2">Protein MIX23</fullName>
    </recommendedName>
    <alternativeName>
        <fullName>Coiled-coil domain-containing protein 58</fullName>
    </alternativeName>
</protein>
<proteinExistence type="evidence at transcript level"/>
<keyword id="KW-0175">Coiled coil</keyword>
<keyword id="KW-1185">Reference proteome</keyword>
<feature type="chain" id="PRO_0000360035" description="Protein MIX23">
    <location>
        <begin position="1"/>
        <end position="144"/>
    </location>
</feature>
<feature type="coiled-coil region" evidence="1">
    <location>
        <begin position="82"/>
        <end position="120"/>
    </location>
</feature>
<reference key="1">
    <citation type="journal article" date="2006" name="Proc. Natl. Acad. Sci. U.S.A.">
        <title>A molecular neuroethological approach for identifying and characterizing a cascade of behaviorally regulated genes.</title>
        <authorList>
            <person name="Wada K."/>
            <person name="Howard J.T."/>
            <person name="McConnell P."/>
            <person name="Whitney O."/>
            <person name="Lints T."/>
            <person name="Rivas M.V."/>
            <person name="Horita H."/>
            <person name="Patterson M.A."/>
            <person name="White S.A."/>
            <person name="Scharff C."/>
            <person name="Haesler S."/>
            <person name="Zhao S."/>
            <person name="Sakaguchi H."/>
            <person name="Hagiwara M."/>
            <person name="Shiraki T."/>
            <person name="Hirozane-Kishikawa T."/>
            <person name="Skene P."/>
            <person name="Hayashizaki Y."/>
            <person name="Carninci P."/>
            <person name="Jarvis E.D."/>
        </authorList>
    </citation>
    <scope>NUCLEOTIDE SEQUENCE [LARGE SCALE MRNA]</scope>
    <source>
        <tissue>Brain</tissue>
    </source>
</reference>
<sequence>MAAPGGAASCEDFAEFQELLRVMRTIDDRIVHELNTTIPTASFVGKVDPGQTCRELYESLMDAHTNRERIIKNCISQTSAVVKTLKEEREKAHEDAALLKQLRKEQTKLKLMQSELNVEEVVNDRSWKVFNERCRIHYKPPKSQ</sequence>
<dbReference type="EMBL" id="DQ213085">
    <property type="protein sequence ID" value="ACH43617.1"/>
    <property type="molecule type" value="mRNA"/>
</dbReference>
<dbReference type="RefSeq" id="NP_001232737.1">
    <property type="nucleotide sequence ID" value="NM_001245808.2"/>
</dbReference>
<dbReference type="SMR" id="B5FX56"/>
<dbReference type="STRING" id="59729.ENSTGUP00000026941"/>
<dbReference type="GeneID" id="100189943"/>
<dbReference type="KEGG" id="tgu:100189943"/>
<dbReference type="CTD" id="131076"/>
<dbReference type="InParanoid" id="B5FX56"/>
<dbReference type="OrthoDB" id="5593818at2759"/>
<dbReference type="Proteomes" id="UP000007754">
    <property type="component" value="Unplaced"/>
</dbReference>
<dbReference type="GO" id="GO:0005758">
    <property type="term" value="C:mitochondrial intermembrane space"/>
    <property type="evidence" value="ECO:0007669"/>
    <property type="project" value="InterPro"/>
</dbReference>
<dbReference type="InterPro" id="IPR019171">
    <property type="entry name" value="MIX23"/>
</dbReference>
<dbReference type="PANTHER" id="PTHR31905">
    <property type="entry name" value="COILED-COIL DOMAIN-CONTAINING PROTEIN 58"/>
    <property type="match status" value="1"/>
</dbReference>
<dbReference type="PANTHER" id="PTHR31905:SF2">
    <property type="entry name" value="PROTEIN MIX23"/>
    <property type="match status" value="1"/>
</dbReference>
<dbReference type="Pfam" id="PF09774">
    <property type="entry name" value="MIX23"/>
    <property type="match status" value="1"/>
</dbReference>
<organism>
    <name type="scientific">Taeniopygia guttata</name>
    <name type="common">Zebra finch</name>
    <name type="synonym">Poephila guttata</name>
    <dbReference type="NCBI Taxonomy" id="59729"/>
    <lineage>
        <taxon>Eukaryota</taxon>
        <taxon>Metazoa</taxon>
        <taxon>Chordata</taxon>
        <taxon>Craniata</taxon>
        <taxon>Vertebrata</taxon>
        <taxon>Euteleostomi</taxon>
        <taxon>Archelosauria</taxon>
        <taxon>Archosauria</taxon>
        <taxon>Dinosauria</taxon>
        <taxon>Saurischia</taxon>
        <taxon>Theropoda</taxon>
        <taxon>Coelurosauria</taxon>
        <taxon>Aves</taxon>
        <taxon>Neognathae</taxon>
        <taxon>Neoaves</taxon>
        <taxon>Telluraves</taxon>
        <taxon>Australaves</taxon>
        <taxon>Passeriformes</taxon>
        <taxon>Passeroidea</taxon>
        <taxon>Estrildidae</taxon>
        <taxon>Estrildinae</taxon>
        <taxon>Taeniopygia</taxon>
    </lineage>
</organism>
<gene>
    <name type="primary">MIX23</name>
    <name type="synonym">CCDC58</name>
</gene>
<name>MIX23_TAEGU</name>
<evidence type="ECO:0000255" key="1"/>
<evidence type="ECO:0000305" key="2"/>
<comment type="similarity">
    <text evidence="2">Belongs to the MIX23 family.</text>
</comment>